<accession>Q889U8</accession>
<dbReference type="EMBL" id="AE016853">
    <property type="protein sequence ID" value="AAO54191.1"/>
    <property type="molecule type" value="Genomic_DNA"/>
</dbReference>
<dbReference type="RefSeq" id="NP_790496.1">
    <property type="nucleotide sequence ID" value="NC_004578.1"/>
</dbReference>
<dbReference type="RefSeq" id="WP_002555466.1">
    <property type="nucleotide sequence ID" value="NC_004578.1"/>
</dbReference>
<dbReference type="SMR" id="Q889U8"/>
<dbReference type="STRING" id="223283.PSPTO_0649"/>
<dbReference type="GeneID" id="98285415"/>
<dbReference type="KEGG" id="pst:PSPTO_0649"/>
<dbReference type="PATRIC" id="fig|223283.9.peg.655"/>
<dbReference type="eggNOG" id="COG0100">
    <property type="taxonomic scope" value="Bacteria"/>
</dbReference>
<dbReference type="HOGENOM" id="CLU_072439_5_0_6"/>
<dbReference type="OrthoDB" id="9806415at2"/>
<dbReference type="PhylomeDB" id="Q889U8"/>
<dbReference type="PRO" id="PR:Q889U8"/>
<dbReference type="Proteomes" id="UP000002515">
    <property type="component" value="Chromosome"/>
</dbReference>
<dbReference type="GO" id="GO:1990904">
    <property type="term" value="C:ribonucleoprotein complex"/>
    <property type="evidence" value="ECO:0007669"/>
    <property type="project" value="UniProtKB-KW"/>
</dbReference>
<dbReference type="GO" id="GO:0005840">
    <property type="term" value="C:ribosome"/>
    <property type="evidence" value="ECO:0007669"/>
    <property type="project" value="UniProtKB-KW"/>
</dbReference>
<dbReference type="GO" id="GO:0019843">
    <property type="term" value="F:rRNA binding"/>
    <property type="evidence" value="ECO:0007669"/>
    <property type="project" value="UniProtKB-UniRule"/>
</dbReference>
<dbReference type="GO" id="GO:0003735">
    <property type="term" value="F:structural constituent of ribosome"/>
    <property type="evidence" value="ECO:0007669"/>
    <property type="project" value="InterPro"/>
</dbReference>
<dbReference type="GO" id="GO:0006412">
    <property type="term" value="P:translation"/>
    <property type="evidence" value="ECO:0007669"/>
    <property type="project" value="UniProtKB-UniRule"/>
</dbReference>
<dbReference type="FunFam" id="3.30.420.80:FF:000001">
    <property type="entry name" value="30S ribosomal protein S11"/>
    <property type="match status" value="1"/>
</dbReference>
<dbReference type="Gene3D" id="3.30.420.80">
    <property type="entry name" value="Ribosomal protein S11"/>
    <property type="match status" value="1"/>
</dbReference>
<dbReference type="HAMAP" id="MF_01310">
    <property type="entry name" value="Ribosomal_uS11"/>
    <property type="match status" value="1"/>
</dbReference>
<dbReference type="InterPro" id="IPR001971">
    <property type="entry name" value="Ribosomal_uS11"/>
</dbReference>
<dbReference type="InterPro" id="IPR019981">
    <property type="entry name" value="Ribosomal_uS11_bac-type"/>
</dbReference>
<dbReference type="InterPro" id="IPR018102">
    <property type="entry name" value="Ribosomal_uS11_CS"/>
</dbReference>
<dbReference type="InterPro" id="IPR036967">
    <property type="entry name" value="Ribosomal_uS11_sf"/>
</dbReference>
<dbReference type="NCBIfam" id="NF003698">
    <property type="entry name" value="PRK05309.1"/>
    <property type="match status" value="1"/>
</dbReference>
<dbReference type="NCBIfam" id="TIGR03632">
    <property type="entry name" value="uS11_bact"/>
    <property type="match status" value="1"/>
</dbReference>
<dbReference type="PANTHER" id="PTHR11759">
    <property type="entry name" value="40S RIBOSOMAL PROTEIN S14/30S RIBOSOMAL PROTEIN S11"/>
    <property type="match status" value="1"/>
</dbReference>
<dbReference type="Pfam" id="PF00411">
    <property type="entry name" value="Ribosomal_S11"/>
    <property type="match status" value="1"/>
</dbReference>
<dbReference type="PIRSF" id="PIRSF002131">
    <property type="entry name" value="Ribosomal_S11"/>
    <property type="match status" value="1"/>
</dbReference>
<dbReference type="SUPFAM" id="SSF53137">
    <property type="entry name" value="Translational machinery components"/>
    <property type="match status" value="1"/>
</dbReference>
<dbReference type="PROSITE" id="PS00054">
    <property type="entry name" value="RIBOSOMAL_S11"/>
    <property type="match status" value="1"/>
</dbReference>
<name>RS11_PSESM</name>
<proteinExistence type="inferred from homology"/>
<organism>
    <name type="scientific">Pseudomonas syringae pv. tomato (strain ATCC BAA-871 / DC3000)</name>
    <dbReference type="NCBI Taxonomy" id="223283"/>
    <lineage>
        <taxon>Bacteria</taxon>
        <taxon>Pseudomonadati</taxon>
        <taxon>Pseudomonadota</taxon>
        <taxon>Gammaproteobacteria</taxon>
        <taxon>Pseudomonadales</taxon>
        <taxon>Pseudomonadaceae</taxon>
        <taxon>Pseudomonas</taxon>
    </lineage>
</organism>
<gene>
    <name evidence="1" type="primary">rpsK</name>
    <name type="ordered locus">PSPTO_0649</name>
</gene>
<evidence type="ECO:0000255" key="1">
    <source>
        <dbReference type="HAMAP-Rule" id="MF_01310"/>
    </source>
</evidence>
<evidence type="ECO:0000305" key="2"/>
<comment type="function">
    <text evidence="1">Located on the platform of the 30S subunit, it bridges several disparate RNA helices of the 16S rRNA. Forms part of the Shine-Dalgarno cleft in the 70S ribosome.</text>
</comment>
<comment type="subunit">
    <text evidence="1">Part of the 30S ribosomal subunit. Interacts with proteins S7 and S18. Binds to IF-3.</text>
</comment>
<comment type="similarity">
    <text evidence="1">Belongs to the universal ribosomal protein uS11 family.</text>
</comment>
<reference key="1">
    <citation type="journal article" date="2003" name="Proc. Natl. Acad. Sci. U.S.A.">
        <title>The complete genome sequence of the Arabidopsis and tomato pathogen Pseudomonas syringae pv. tomato DC3000.</title>
        <authorList>
            <person name="Buell C.R."/>
            <person name="Joardar V."/>
            <person name="Lindeberg M."/>
            <person name="Selengut J."/>
            <person name="Paulsen I.T."/>
            <person name="Gwinn M.L."/>
            <person name="Dodson R.J."/>
            <person name="DeBoy R.T."/>
            <person name="Durkin A.S."/>
            <person name="Kolonay J.F."/>
            <person name="Madupu R."/>
            <person name="Daugherty S.C."/>
            <person name="Brinkac L.M."/>
            <person name="Beanan M.J."/>
            <person name="Haft D.H."/>
            <person name="Nelson W.C."/>
            <person name="Davidsen T.M."/>
            <person name="Zafar N."/>
            <person name="Zhou L."/>
            <person name="Liu J."/>
            <person name="Yuan Q."/>
            <person name="Khouri H.M."/>
            <person name="Fedorova N.B."/>
            <person name="Tran B."/>
            <person name="Russell D."/>
            <person name="Berry K.J."/>
            <person name="Utterback T.R."/>
            <person name="Van Aken S.E."/>
            <person name="Feldblyum T.V."/>
            <person name="D'Ascenzo M."/>
            <person name="Deng W.-L."/>
            <person name="Ramos A.R."/>
            <person name="Alfano J.R."/>
            <person name="Cartinhour S."/>
            <person name="Chatterjee A.K."/>
            <person name="Delaney T.P."/>
            <person name="Lazarowitz S.G."/>
            <person name="Martin G.B."/>
            <person name="Schneider D.J."/>
            <person name="Tang X."/>
            <person name="Bender C.L."/>
            <person name="White O."/>
            <person name="Fraser C.M."/>
            <person name="Collmer A."/>
        </authorList>
    </citation>
    <scope>NUCLEOTIDE SEQUENCE [LARGE SCALE GENOMIC DNA]</scope>
    <source>
        <strain>ATCC BAA-871 / DC3000</strain>
    </source>
</reference>
<protein>
    <recommendedName>
        <fullName evidence="1">Small ribosomal subunit protein uS11</fullName>
    </recommendedName>
    <alternativeName>
        <fullName evidence="2">30S ribosomal protein S11</fullName>
    </alternativeName>
</protein>
<keyword id="KW-1185">Reference proteome</keyword>
<keyword id="KW-0687">Ribonucleoprotein</keyword>
<keyword id="KW-0689">Ribosomal protein</keyword>
<keyword id="KW-0694">RNA-binding</keyword>
<keyword id="KW-0699">rRNA-binding</keyword>
<feature type="chain" id="PRO_0000123203" description="Small ribosomal subunit protein uS11">
    <location>
        <begin position="1"/>
        <end position="129"/>
    </location>
</feature>
<sequence>MAKPAARPRKKVKKTVVDGIAHIHASFNNTIVTITDRQGNALSWATSGGSGFRGSRKSTPFAAQVAAERAGQAALEYGLKNLDVNVKGPGPGRESAVRALNGCGYKIASITDVTPIPHNGCRPPKKRRV</sequence>